<evidence type="ECO:0000255" key="1"/>
<evidence type="ECO:0000305" key="2"/>
<proteinExistence type="inferred from homology"/>
<protein>
    <recommendedName>
        <fullName>Protein U23</fullName>
    </recommendedName>
</protein>
<organism>
    <name type="scientific">Human herpesvirus 6B (strain Z29)</name>
    <name type="common">HHV-6 variant B</name>
    <name type="synonym">Human B lymphotropic virus</name>
    <dbReference type="NCBI Taxonomy" id="36351"/>
    <lineage>
        <taxon>Viruses</taxon>
        <taxon>Duplodnaviria</taxon>
        <taxon>Heunggongvirae</taxon>
        <taxon>Peploviricota</taxon>
        <taxon>Herviviricetes</taxon>
        <taxon>Herpesvirales</taxon>
        <taxon>Orthoherpesviridae</taxon>
        <taxon>Betaherpesvirinae</taxon>
        <taxon>Roseolovirus</taxon>
        <taxon>Roseolovirus humanbeta6b</taxon>
        <taxon>Human herpesvirus 6B</taxon>
    </lineage>
</organism>
<comment type="subcellular location">
    <subcellularLocation>
        <location evidence="2">Host membrane</location>
        <topology evidence="2">Single-pass membrane protein</topology>
    </subcellularLocation>
</comment>
<dbReference type="EMBL" id="AF157706">
    <property type="protein sequence ID" value="AAD49688.1"/>
    <property type="molecule type" value="Genomic_DNA"/>
</dbReference>
<dbReference type="RefSeq" id="NP_050203.1">
    <property type="nucleotide sequence ID" value="NC_000898.1"/>
</dbReference>
<dbReference type="SMR" id="Q9QJ43"/>
<dbReference type="DNASU" id="1497100"/>
<dbReference type="GeneID" id="1497100"/>
<dbReference type="KEGG" id="vg:1497100"/>
<dbReference type="Proteomes" id="UP000006930">
    <property type="component" value="Segment"/>
</dbReference>
<dbReference type="GO" id="GO:0033644">
    <property type="term" value="C:host cell membrane"/>
    <property type="evidence" value="ECO:0007669"/>
    <property type="project" value="UniProtKB-SubCell"/>
</dbReference>
<dbReference type="GO" id="GO:0016020">
    <property type="term" value="C:membrane"/>
    <property type="evidence" value="ECO:0007669"/>
    <property type="project" value="UniProtKB-KW"/>
</dbReference>
<keyword id="KW-1043">Host membrane</keyword>
<keyword id="KW-0472">Membrane</keyword>
<keyword id="KW-1185">Reference proteome</keyword>
<keyword id="KW-0732">Signal</keyword>
<keyword id="KW-0812">Transmembrane</keyword>
<keyword id="KW-1133">Transmembrane helix</keyword>
<sequence length="299" mass="33250">MRKSEFNAKSCFLMIGICVFNLNSSSCIIKTNAEHCSKRLFSFCYLGVGVIKKPLHLGNRKNMLFLSFLLVCLCEEVQMLNLTTTEVSATEFASIASKNMETNVSTSSDYLTGKSETTFSANPETWGKNVTEISIASVAYLNQSSMVTSTLAVGTTNRSSGNNVNVTTSSFPTVKGDEAQDIETFFTVILASTLSDVSEKTPQGLPTKSTPKKTVQALWETDTVQVPELTDTNEGDEEYFKDFLSSLVIWICGISFVGAFIIVIVILYNWYKKDKQRSLLWDEENKPDVQIRRDAKTCR</sequence>
<feature type="signal peptide" evidence="1">
    <location>
        <begin position="1"/>
        <end position="27"/>
    </location>
</feature>
<feature type="chain" id="PRO_0000408425" description="Protein U23">
    <location>
        <begin position="28"/>
        <end position="299"/>
    </location>
</feature>
<feature type="transmembrane region" description="Helical" evidence="1">
    <location>
        <begin position="247"/>
        <end position="267"/>
    </location>
</feature>
<accession>Q9QJ43</accession>
<reference key="1">
    <citation type="journal article" date="1999" name="J. Virol.">
        <title>Human herpesvirus 6B genome sequence: coding content and comparison with human herpesvirus 6A.</title>
        <authorList>
            <person name="Dominguez G."/>
            <person name="Dambaugh T.R."/>
            <person name="Stamey F.R."/>
            <person name="Dewhurst S."/>
            <person name="Inoue N."/>
            <person name="Pellett P.E."/>
        </authorList>
    </citation>
    <scope>NUCLEOTIDE SEQUENCE [LARGE SCALE GENOMIC DNA]</scope>
</reference>
<organismHost>
    <name type="scientific">Homo sapiens</name>
    <name type="common">Human</name>
    <dbReference type="NCBI Taxonomy" id="9606"/>
</organismHost>
<name>U23_HHV6Z</name>
<gene>
    <name type="primary">U23</name>
</gene>